<organism>
    <name type="scientific">Danio rerio</name>
    <name type="common">Zebrafish</name>
    <name type="synonym">Brachydanio rerio</name>
    <dbReference type="NCBI Taxonomy" id="7955"/>
    <lineage>
        <taxon>Eukaryota</taxon>
        <taxon>Metazoa</taxon>
        <taxon>Chordata</taxon>
        <taxon>Craniata</taxon>
        <taxon>Vertebrata</taxon>
        <taxon>Euteleostomi</taxon>
        <taxon>Actinopterygii</taxon>
        <taxon>Neopterygii</taxon>
        <taxon>Teleostei</taxon>
        <taxon>Ostariophysi</taxon>
        <taxon>Cypriniformes</taxon>
        <taxon>Danionidae</taxon>
        <taxon>Danioninae</taxon>
        <taxon>Danio</taxon>
    </lineage>
</organism>
<name>ZMAT5_DANRE</name>
<proteinExistence type="evidence at transcript level"/>
<evidence type="ECO:0000250" key="1"/>
<evidence type="ECO:0000255" key="2">
    <source>
        <dbReference type="PROSITE-ProRule" id="PRU00723"/>
    </source>
</evidence>
<evidence type="ECO:0000256" key="3">
    <source>
        <dbReference type="SAM" id="MobiDB-lite"/>
    </source>
</evidence>
<protein>
    <recommendedName>
        <fullName>Zinc finger matrin-type protein 5</fullName>
    </recommendedName>
    <alternativeName>
        <fullName>U11/U12 small nuclear ribonucleoprotein 20 kDa protein</fullName>
        <shortName>U11/U12 snRNP 20 kDa protein</shortName>
    </alternativeName>
</protein>
<sequence>MGKRYYCDYCDRSFQDNLHNRKKHLNGVQHHRAKKAWFDNFRDAATLLNDERSKEVCRKFVQTGQCVFGTSCRFSHMSEKQMKMLEQKIDDEKRQKEDPDQDGSSERSVDEWLSRREKKLAALTSGRVLRMEEEECTENIEIPPYLLSIPDLPPSLHPPPAGGWRVTVHNEWG</sequence>
<comment type="subunit">
    <text evidence="1">Component of the U11/U12 snRNPs that are part of the U12-type spliceosome.</text>
</comment>
<comment type="subcellular location">
    <subcellularLocation>
        <location evidence="1">Nucleus</location>
    </subcellularLocation>
</comment>
<accession>Q6AXL8</accession>
<keyword id="KW-0479">Metal-binding</keyword>
<keyword id="KW-0507">mRNA processing</keyword>
<keyword id="KW-0508">mRNA splicing</keyword>
<keyword id="KW-0539">Nucleus</keyword>
<keyword id="KW-1185">Reference proteome</keyword>
<keyword id="KW-0747">Spliceosome</keyword>
<keyword id="KW-0862">Zinc</keyword>
<keyword id="KW-0863">Zinc-finger</keyword>
<gene>
    <name type="primary">zmat5</name>
    <name type="ORF">zgc:101022</name>
</gene>
<reference key="1">
    <citation type="submission" date="2004-08" db="EMBL/GenBank/DDBJ databases">
        <authorList>
            <consortium name="NIH - Zebrafish Gene Collection (ZGC) project"/>
        </authorList>
    </citation>
    <scope>NUCLEOTIDE SEQUENCE [LARGE SCALE MRNA]</scope>
    <source>
        <tissue>Embryo</tissue>
    </source>
</reference>
<dbReference type="EMBL" id="BC079486">
    <property type="protein sequence ID" value="AAH79486.1"/>
    <property type="molecule type" value="mRNA"/>
</dbReference>
<dbReference type="RefSeq" id="NP_001003771.1">
    <property type="nucleotide sequence ID" value="NM_001003771.1"/>
</dbReference>
<dbReference type="SMR" id="Q6AXL8"/>
<dbReference type="FunCoup" id="Q6AXL8">
    <property type="interactions" value="428"/>
</dbReference>
<dbReference type="STRING" id="7955.ENSDARP00000051356"/>
<dbReference type="PaxDb" id="7955-ENSDARP00000117835"/>
<dbReference type="GeneID" id="445314"/>
<dbReference type="KEGG" id="dre:445314"/>
<dbReference type="AGR" id="ZFIN:ZDB-GENE-040808-31"/>
<dbReference type="CTD" id="55954"/>
<dbReference type="ZFIN" id="ZDB-GENE-040808-31">
    <property type="gene designation" value="zmat5"/>
</dbReference>
<dbReference type="eggNOG" id="KOG3454">
    <property type="taxonomic scope" value="Eukaryota"/>
</dbReference>
<dbReference type="InParanoid" id="Q6AXL8"/>
<dbReference type="OrthoDB" id="2417221at2759"/>
<dbReference type="PhylomeDB" id="Q6AXL8"/>
<dbReference type="PRO" id="PR:Q6AXL8"/>
<dbReference type="Proteomes" id="UP000000437">
    <property type="component" value="Chromosome 5"/>
</dbReference>
<dbReference type="GO" id="GO:0005689">
    <property type="term" value="C:U12-type spliceosomal complex"/>
    <property type="evidence" value="ECO:0000318"/>
    <property type="project" value="GO_Central"/>
</dbReference>
<dbReference type="GO" id="GO:0008270">
    <property type="term" value="F:zinc ion binding"/>
    <property type="evidence" value="ECO:0007669"/>
    <property type="project" value="UniProtKB-KW"/>
</dbReference>
<dbReference type="GO" id="GO:0006397">
    <property type="term" value="P:mRNA processing"/>
    <property type="evidence" value="ECO:0007669"/>
    <property type="project" value="UniProtKB-KW"/>
</dbReference>
<dbReference type="GO" id="GO:0008380">
    <property type="term" value="P:RNA splicing"/>
    <property type="evidence" value="ECO:0007669"/>
    <property type="project" value="UniProtKB-KW"/>
</dbReference>
<dbReference type="FunFam" id="3.30.160.60:FF:000741">
    <property type="entry name" value="Zinc finger matrin-type protein 5"/>
    <property type="match status" value="1"/>
</dbReference>
<dbReference type="Gene3D" id="3.30.1370.210">
    <property type="match status" value="1"/>
</dbReference>
<dbReference type="Gene3D" id="3.30.160.60">
    <property type="entry name" value="Classic Zinc Finger"/>
    <property type="match status" value="1"/>
</dbReference>
<dbReference type="InterPro" id="IPR013085">
    <property type="entry name" value="U1-CZ_Znf_C2H2"/>
</dbReference>
<dbReference type="InterPro" id="IPR041367">
    <property type="entry name" value="Znf-CCCH_4"/>
</dbReference>
<dbReference type="InterPro" id="IPR036236">
    <property type="entry name" value="Znf_C2H2_sf"/>
</dbReference>
<dbReference type="InterPro" id="IPR000571">
    <property type="entry name" value="Znf_CCCH"/>
</dbReference>
<dbReference type="InterPro" id="IPR036855">
    <property type="entry name" value="Znf_CCCH_sf"/>
</dbReference>
<dbReference type="PANTHER" id="PTHR16465">
    <property type="entry name" value="NUCLEASE-RELATED"/>
    <property type="match status" value="1"/>
</dbReference>
<dbReference type="PANTHER" id="PTHR16465:SF0">
    <property type="entry name" value="ZINC FINGER MATRIN-TYPE PROTEIN 5"/>
    <property type="match status" value="1"/>
</dbReference>
<dbReference type="Pfam" id="PF18044">
    <property type="entry name" value="zf-CCCH_4"/>
    <property type="match status" value="1"/>
</dbReference>
<dbReference type="Pfam" id="PF06220">
    <property type="entry name" value="zf-U1"/>
    <property type="match status" value="1"/>
</dbReference>
<dbReference type="SMART" id="SM00356">
    <property type="entry name" value="ZnF_C3H1"/>
    <property type="match status" value="1"/>
</dbReference>
<dbReference type="SUPFAM" id="SSF57667">
    <property type="entry name" value="beta-beta-alpha zinc fingers"/>
    <property type="match status" value="1"/>
</dbReference>
<dbReference type="SUPFAM" id="SSF90229">
    <property type="entry name" value="CCCH zinc finger"/>
    <property type="match status" value="1"/>
</dbReference>
<dbReference type="PROSITE" id="PS50103">
    <property type="entry name" value="ZF_C3H1"/>
    <property type="match status" value="1"/>
</dbReference>
<feature type="chain" id="PRO_0000254116" description="Zinc finger matrin-type protein 5">
    <location>
        <begin position="1"/>
        <end position="173"/>
    </location>
</feature>
<feature type="zinc finger region" description="C3H1-type" evidence="2">
    <location>
        <begin position="51"/>
        <end position="79"/>
    </location>
</feature>
<feature type="region of interest" description="Disordered" evidence="3">
    <location>
        <begin position="83"/>
        <end position="111"/>
    </location>
</feature>